<sequence>MWTWKADRPVAVIVIIHGASEYHGRYKWLIEMWRSSGYHVVMGDLPGQGTTTRARGHIRSFQEYIDEVDAWIDKARTFDLPVFLLGHSMGGLVAIEWVKQQRNPRITGIILSSPCLGLQIKVNKALDLASKGLNVIAPSLKVDSGLSIDMATRNEDVIEADQNDSLYVRKVSVRWYRELLKTIESAMVPTEAFLKVPLLVMQAGDDKLVDKTMVIKWFNGVASHNKAYREWEGLYHEIFNEPEREDVFKAARAFTDQYI</sequence>
<protein>
    <recommendedName>
        <fullName>Phospholipase YtpA</fullName>
        <ecNumber>3.1.1.-</ecNumber>
    </recommendedName>
    <alternativeName>
        <fullName>Bacilysocin biosynthesis protein YtpA</fullName>
    </alternativeName>
</protein>
<keyword id="KW-0045">Antibiotic biosynthesis</keyword>
<keyword id="KW-0378">Hydrolase</keyword>
<keyword id="KW-1185">Reference proteome</keyword>
<keyword id="KW-0719">Serine esterase</keyword>
<evidence type="ECO:0000250" key="1"/>
<evidence type="ECO:0000255" key="2">
    <source>
        <dbReference type="PROSITE-ProRule" id="PRU10037"/>
    </source>
</evidence>
<evidence type="ECO:0000269" key="3">
    <source>
    </source>
</evidence>
<evidence type="ECO:0000305" key="4"/>
<feature type="chain" id="PRO_0000386473" description="Phospholipase YtpA">
    <location>
        <begin position="1"/>
        <end position="259"/>
    </location>
</feature>
<feature type="active site" description="Nucleophile" evidence="1">
    <location>
        <position position="88"/>
    </location>
</feature>
<feature type="active site" description="Charge relay system" evidence="2">
    <location>
        <position position="206"/>
    </location>
</feature>
<feature type="active site" description="Charge relay system" evidence="2">
    <location>
        <position position="236"/>
    </location>
</feature>
<name>PLBAC_BACSU</name>
<comment type="function">
    <text evidence="3">Phospholipase involved in the biosynthesis of the antibiotic bacilysocin. It probably catalyzes the hydrolysis of the 2-sn-acyl moiety of phosphatidylglycerol to produce bacilysocin (lysophosphatidylglycerol). Is also able to catalyze the hydrolysis reaction of one acyl bond in phosphatidylcholine in vitro (actual cleavage point is unknown), resulting in lysophosphatidylcholine.</text>
</comment>
<comment type="pathway">
    <text evidence="3">Antibiotic biosynthesis; bacilysocin biosynthesis.</text>
</comment>
<comment type="disruption phenotype">
    <text evidence="3">Cells lacking this gene entirely lose the ability to produce bacilysocin and display a 10-fold reduction in the ability to form spores.</text>
</comment>
<comment type="similarity">
    <text evidence="4">Belongs to the AB hydrolase superfamily.</text>
</comment>
<accession>O34705</accession>
<accession>Q795P7</accession>
<proteinExistence type="evidence at protein level"/>
<organism>
    <name type="scientific">Bacillus subtilis (strain 168)</name>
    <dbReference type="NCBI Taxonomy" id="224308"/>
    <lineage>
        <taxon>Bacteria</taxon>
        <taxon>Bacillati</taxon>
        <taxon>Bacillota</taxon>
        <taxon>Bacilli</taxon>
        <taxon>Bacillales</taxon>
        <taxon>Bacillaceae</taxon>
        <taxon>Bacillus</taxon>
    </lineage>
</organism>
<dbReference type="EC" id="3.1.1.-"/>
<dbReference type="EMBL" id="AF008220">
    <property type="protein sequence ID" value="AAC00245.1"/>
    <property type="molecule type" value="Genomic_DNA"/>
</dbReference>
<dbReference type="EMBL" id="AL009126">
    <property type="protein sequence ID" value="CAB15029.1"/>
    <property type="molecule type" value="Genomic_DNA"/>
</dbReference>
<dbReference type="PIR" id="D69998">
    <property type="entry name" value="D69998"/>
</dbReference>
<dbReference type="RefSeq" id="NP_390929.1">
    <property type="nucleotide sequence ID" value="NC_000964.3"/>
</dbReference>
<dbReference type="RefSeq" id="WP_004398545.1">
    <property type="nucleotide sequence ID" value="NZ_OZ025638.1"/>
</dbReference>
<dbReference type="SMR" id="O34705"/>
<dbReference type="FunCoup" id="O34705">
    <property type="interactions" value="195"/>
</dbReference>
<dbReference type="STRING" id="224308.BSU30510"/>
<dbReference type="ESTHER" id="bacsu-YTPA">
    <property type="family name" value="Monoglyceridelipase_lysophospholip"/>
</dbReference>
<dbReference type="PaxDb" id="224308-BSU30510"/>
<dbReference type="EnsemblBacteria" id="CAB15029">
    <property type="protein sequence ID" value="CAB15029"/>
    <property type="gene ID" value="BSU_30510"/>
</dbReference>
<dbReference type="GeneID" id="937237"/>
<dbReference type="KEGG" id="bsu:BSU30510"/>
<dbReference type="PATRIC" id="fig|224308.179.peg.3309"/>
<dbReference type="eggNOG" id="COG2267">
    <property type="taxonomic scope" value="Bacteria"/>
</dbReference>
<dbReference type="InParanoid" id="O34705"/>
<dbReference type="OrthoDB" id="9806902at2"/>
<dbReference type="PhylomeDB" id="O34705"/>
<dbReference type="BioCyc" id="BSUB:BSU30510-MONOMER"/>
<dbReference type="UniPathway" id="UPA01001"/>
<dbReference type="Proteomes" id="UP000001570">
    <property type="component" value="Chromosome"/>
</dbReference>
<dbReference type="GO" id="GO:0016020">
    <property type="term" value="C:membrane"/>
    <property type="evidence" value="ECO:0000318"/>
    <property type="project" value="GO_Central"/>
</dbReference>
<dbReference type="GO" id="GO:0052689">
    <property type="term" value="F:carboxylic ester hydrolase activity"/>
    <property type="evidence" value="ECO:0007669"/>
    <property type="project" value="UniProtKB-KW"/>
</dbReference>
<dbReference type="GO" id="GO:0016298">
    <property type="term" value="F:lipase activity"/>
    <property type="evidence" value="ECO:0000318"/>
    <property type="project" value="GO_Central"/>
</dbReference>
<dbReference type="GO" id="GO:0017000">
    <property type="term" value="P:antibiotic biosynthetic process"/>
    <property type="evidence" value="ECO:0007669"/>
    <property type="project" value="UniProtKB-KW"/>
</dbReference>
<dbReference type="FunFam" id="3.40.50.1820:FF:000154">
    <property type="entry name" value="Alpha/beta hydrolase"/>
    <property type="match status" value="1"/>
</dbReference>
<dbReference type="Gene3D" id="3.40.50.1820">
    <property type="entry name" value="alpha/beta hydrolase"/>
    <property type="match status" value="1"/>
</dbReference>
<dbReference type="InterPro" id="IPR000073">
    <property type="entry name" value="AB_hydrolase_1"/>
</dbReference>
<dbReference type="InterPro" id="IPR029058">
    <property type="entry name" value="AB_hydrolase_fold"/>
</dbReference>
<dbReference type="InterPro" id="IPR022742">
    <property type="entry name" value="Hydrolase_4"/>
</dbReference>
<dbReference type="InterPro" id="IPR051044">
    <property type="entry name" value="MAG_DAG_Lipase"/>
</dbReference>
<dbReference type="PANTHER" id="PTHR11614">
    <property type="entry name" value="PHOSPHOLIPASE-RELATED"/>
    <property type="match status" value="1"/>
</dbReference>
<dbReference type="Pfam" id="PF12146">
    <property type="entry name" value="Hydrolase_4"/>
    <property type="match status" value="1"/>
</dbReference>
<dbReference type="PRINTS" id="PR00111">
    <property type="entry name" value="ABHYDROLASE"/>
</dbReference>
<dbReference type="SUPFAM" id="SSF53474">
    <property type="entry name" value="alpha/beta-Hydrolases"/>
    <property type="match status" value="1"/>
</dbReference>
<dbReference type="PROSITE" id="PS00120">
    <property type="entry name" value="LIPASE_SER"/>
    <property type="match status" value="1"/>
</dbReference>
<reference key="1">
    <citation type="journal article" date="1997" name="Microbiology">
        <title>Sequencing and functional annotation of the Bacillus subtilis genes in the 200 kb rrnB-dnaB region.</title>
        <authorList>
            <person name="Lapidus A."/>
            <person name="Galleron N."/>
            <person name="Sorokin A."/>
            <person name="Ehrlich S.D."/>
        </authorList>
    </citation>
    <scope>NUCLEOTIDE SEQUENCE [GENOMIC DNA]</scope>
    <source>
        <strain>168</strain>
    </source>
</reference>
<reference key="2">
    <citation type="journal article" date="1997" name="Nature">
        <title>The complete genome sequence of the Gram-positive bacterium Bacillus subtilis.</title>
        <authorList>
            <person name="Kunst F."/>
            <person name="Ogasawara N."/>
            <person name="Moszer I."/>
            <person name="Albertini A.M."/>
            <person name="Alloni G."/>
            <person name="Azevedo V."/>
            <person name="Bertero M.G."/>
            <person name="Bessieres P."/>
            <person name="Bolotin A."/>
            <person name="Borchert S."/>
            <person name="Borriss R."/>
            <person name="Boursier L."/>
            <person name="Brans A."/>
            <person name="Braun M."/>
            <person name="Brignell S.C."/>
            <person name="Bron S."/>
            <person name="Brouillet S."/>
            <person name="Bruschi C.V."/>
            <person name="Caldwell B."/>
            <person name="Capuano V."/>
            <person name="Carter N.M."/>
            <person name="Choi S.-K."/>
            <person name="Codani J.-J."/>
            <person name="Connerton I.F."/>
            <person name="Cummings N.J."/>
            <person name="Daniel R.A."/>
            <person name="Denizot F."/>
            <person name="Devine K.M."/>
            <person name="Duesterhoeft A."/>
            <person name="Ehrlich S.D."/>
            <person name="Emmerson P.T."/>
            <person name="Entian K.-D."/>
            <person name="Errington J."/>
            <person name="Fabret C."/>
            <person name="Ferrari E."/>
            <person name="Foulger D."/>
            <person name="Fritz C."/>
            <person name="Fujita M."/>
            <person name="Fujita Y."/>
            <person name="Fuma S."/>
            <person name="Galizzi A."/>
            <person name="Galleron N."/>
            <person name="Ghim S.-Y."/>
            <person name="Glaser P."/>
            <person name="Goffeau A."/>
            <person name="Golightly E.J."/>
            <person name="Grandi G."/>
            <person name="Guiseppi G."/>
            <person name="Guy B.J."/>
            <person name="Haga K."/>
            <person name="Haiech J."/>
            <person name="Harwood C.R."/>
            <person name="Henaut A."/>
            <person name="Hilbert H."/>
            <person name="Holsappel S."/>
            <person name="Hosono S."/>
            <person name="Hullo M.-F."/>
            <person name="Itaya M."/>
            <person name="Jones L.-M."/>
            <person name="Joris B."/>
            <person name="Karamata D."/>
            <person name="Kasahara Y."/>
            <person name="Klaerr-Blanchard M."/>
            <person name="Klein C."/>
            <person name="Kobayashi Y."/>
            <person name="Koetter P."/>
            <person name="Koningstein G."/>
            <person name="Krogh S."/>
            <person name="Kumano M."/>
            <person name="Kurita K."/>
            <person name="Lapidus A."/>
            <person name="Lardinois S."/>
            <person name="Lauber J."/>
            <person name="Lazarevic V."/>
            <person name="Lee S.-M."/>
            <person name="Levine A."/>
            <person name="Liu H."/>
            <person name="Masuda S."/>
            <person name="Mauel C."/>
            <person name="Medigue C."/>
            <person name="Medina N."/>
            <person name="Mellado R.P."/>
            <person name="Mizuno M."/>
            <person name="Moestl D."/>
            <person name="Nakai S."/>
            <person name="Noback M."/>
            <person name="Noone D."/>
            <person name="O'Reilly M."/>
            <person name="Ogawa K."/>
            <person name="Ogiwara A."/>
            <person name="Oudega B."/>
            <person name="Park S.-H."/>
            <person name="Parro V."/>
            <person name="Pohl T.M."/>
            <person name="Portetelle D."/>
            <person name="Porwollik S."/>
            <person name="Prescott A.M."/>
            <person name="Presecan E."/>
            <person name="Pujic P."/>
            <person name="Purnelle B."/>
            <person name="Rapoport G."/>
            <person name="Rey M."/>
            <person name="Reynolds S."/>
            <person name="Rieger M."/>
            <person name="Rivolta C."/>
            <person name="Rocha E."/>
            <person name="Roche B."/>
            <person name="Rose M."/>
            <person name="Sadaie Y."/>
            <person name="Sato T."/>
            <person name="Scanlan E."/>
            <person name="Schleich S."/>
            <person name="Schroeter R."/>
            <person name="Scoffone F."/>
            <person name="Sekiguchi J."/>
            <person name="Sekowska A."/>
            <person name="Seror S.J."/>
            <person name="Serror P."/>
            <person name="Shin B.-S."/>
            <person name="Soldo B."/>
            <person name="Sorokin A."/>
            <person name="Tacconi E."/>
            <person name="Takagi T."/>
            <person name="Takahashi H."/>
            <person name="Takemaru K."/>
            <person name="Takeuchi M."/>
            <person name="Tamakoshi A."/>
            <person name="Tanaka T."/>
            <person name="Terpstra P."/>
            <person name="Tognoni A."/>
            <person name="Tosato V."/>
            <person name="Uchiyama S."/>
            <person name="Vandenbol M."/>
            <person name="Vannier F."/>
            <person name="Vassarotti A."/>
            <person name="Viari A."/>
            <person name="Wambutt R."/>
            <person name="Wedler E."/>
            <person name="Wedler H."/>
            <person name="Weitzenegger T."/>
            <person name="Winters P."/>
            <person name="Wipat A."/>
            <person name="Yamamoto H."/>
            <person name="Yamane K."/>
            <person name="Yasumoto K."/>
            <person name="Yata K."/>
            <person name="Yoshida K."/>
            <person name="Yoshikawa H.-F."/>
            <person name="Zumstein E."/>
            <person name="Yoshikawa H."/>
            <person name="Danchin A."/>
        </authorList>
    </citation>
    <scope>NUCLEOTIDE SEQUENCE [LARGE SCALE GENOMIC DNA]</scope>
    <source>
        <strain>168</strain>
    </source>
</reference>
<reference key="3">
    <citation type="journal article" date="2002" name="Antimicrob. Agents Chemother.">
        <title>Bacilysocin, a novel phospholipid antibiotic produced by Bacillus subtilis 168.</title>
        <authorList>
            <person name="Tamehiro N."/>
            <person name="Okamoto-Hosoya Y."/>
            <person name="Okamoto S."/>
            <person name="Ubukata M."/>
            <person name="Hamada M."/>
            <person name="Naganawa H."/>
            <person name="Ochi K."/>
        </authorList>
    </citation>
    <scope>FUNCTION IN BACILYSOCIN SYNTHESIS</scope>
    <scope>PATHWAY</scope>
    <scope>DISRUPTION PHENOTYPE</scope>
    <source>
        <strain>168</strain>
    </source>
</reference>
<gene>
    <name type="primary">ytpA</name>
    <name type="ordered locus">BSU30510</name>
</gene>